<protein>
    <recommendedName>
        <fullName evidence="1">Phosphatidylglycerol--prolipoprotein diacylglyceryl transferase</fullName>
        <ecNumber evidence="1">2.5.1.145</ecNumber>
    </recommendedName>
</protein>
<proteinExistence type="inferred from homology"/>
<organism>
    <name type="scientific">Prochlorococcus marinus (strain MIT 9301)</name>
    <dbReference type="NCBI Taxonomy" id="167546"/>
    <lineage>
        <taxon>Bacteria</taxon>
        <taxon>Bacillati</taxon>
        <taxon>Cyanobacteriota</taxon>
        <taxon>Cyanophyceae</taxon>
        <taxon>Synechococcales</taxon>
        <taxon>Prochlorococcaceae</taxon>
        <taxon>Prochlorococcus</taxon>
    </lineage>
</organism>
<dbReference type="EC" id="2.5.1.145" evidence="1"/>
<dbReference type="EMBL" id="CP000576">
    <property type="protein sequence ID" value="ABO17108.1"/>
    <property type="molecule type" value="Genomic_DNA"/>
</dbReference>
<dbReference type="RefSeq" id="WP_011862483.1">
    <property type="nucleotide sequence ID" value="NC_009091.1"/>
</dbReference>
<dbReference type="SMR" id="A3PBI3"/>
<dbReference type="STRING" id="167546.P9301_04851"/>
<dbReference type="KEGG" id="pmg:P9301_04851"/>
<dbReference type="eggNOG" id="COG0682">
    <property type="taxonomic scope" value="Bacteria"/>
</dbReference>
<dbReference type="HOGENOM" id="CLU_013386_1_2_3"/>
<dbReference type="OrthoDB" id="871140at2"/>
<dbReference type="UniPathway" id="UPA00664"/>
<dbReference type="Proteomes" id="UP000001430">
    <property type="component" value="Chromosome"/>
</dbReference>
<dbReference type="GO" id="GO:0005886">
    <property type="term" value="C:plasma membrane"/>
    <property type="evidence" value="ECO:0007669"/>
    <property type="project" value="UniProtKB-SubCell"/>
</dbReference>
<dbReference type="GO" id="GO:0008961">
    <property type="term" value="F:phosphatidylglycerol-prolipoprotein diacylglyceryl transferase activity"/>
    <property type="evidence" value="ECO:0007669"/>
    <property type="project" value="UniProtKB-UniRule"/>
</dbReference>
<dbReference type="GO" id="GO:0042158">
    <property type="term" value="P:lipoprotein biosynthetic process"/>
    <property type="evidence" value="ECO:0007669"/>
    <property type="project" value="UniProtKB-UniRule"/>
</dbReference>
<dbReference type="HAMAP" id="MF_01147">
    <property type="entry name" value="Lgt"/>
    <property type="match status" value="1"/>
</dbReference>
<dbReference type="InterPro" id="IPR001640">
    <property type="entry name" value="Lgt"/>
</dbReference>
<dbReference type="NCBIfam" id="TIGR00544">
    <property type="entry name" value="lgt"/>
    <property type="match status" value="1"/>
</dbReference>
<dbReference type="PANTHER" id="PTHR30589:SF0">
    <property type="entry name" value="PHOSPHATIDYLGLYCEROL--PROLIPOPROTEIN DIACYLGLYCERYL TRANSFERASE"/>
    <property type="match status" value="1"/>
</dbReference>
<dbReference type="PANTHER" id="PTHR30589">
    <property type="entry name" value="PROLIPOPROTEIN DIACYLGLYCERYL TRANSFERASE"/>
    <property type="match status" value="1"/>
</dbReference>
<dbReference type="Pfam" id="PF01790">
    <property type="entry name" value="LGT"/>
    <property type="match status" value="1"/>
</dbReference>
<dbReference type="PROSITE" id="PS01311">
    <property type="entry name" value="LGT"/>
    <property type="match status" value="1"/>
</dbReference>
<comment type="function">
    <text evidence="1">Catalyzes the transfer of the diacylglyceryl group from phosphatidylglycerol to the sulfhydryl group of the N-terminal cysteine of a prolipoprotein, the first step in the formation of mature lipoproteins.</text>
</comment>
<comment type="catalytic activity">
    <reaction evidence="1">
        <text>L-cysteinyl-[prolipoprotein] + a 1,2-diacyl-sn-glycero-3-phospho-(1'-sn-glycerol) = an S-1,2-diacyl-sn-glyceryl-L-cysteinyl-[prolipoprotein] + sn-glycerol 1-phosphate + H(+)</text>
        <dbReference type="Rhea" id="RHEA:56712"/>
        <dbReference type="Rhea" id="RHEA-COMP:14679"/>
        <dbReference type="Rhea" id="RHEA-COMP:14680"/>
        <dbReference type="ChEBI" id="CHEBI:15378"/>
        <dbReference type="ChEBI" id="CHEBI:29950"/>
        <dbReference type="ChEBI" id="CHEBI:57685"/>
        <dbReference type="ChEBI" id="CHEBI:64716"/>
        <dbReference type="ChEBI" id="CHEBI:140658"/>
        <dbReference type="EC" id="2.5.1.145"/>
    </reaction>
</comment>
<comment type="pathway">
    <text evidence="1">Protein modification; lipoprotein biosynthesis (diacylglyceryl transfer).</text>
</comment>
<comment type="subcellular location">
    <subcellularLocation>
        <location evidence="1">Cell inner membrane</location>
        <topology evidence="1">Multi-pass membrane protein</topology>
    </subcellularLocation>
</comment>
<comment type="similarity">
    <text evidence="1">Belongs to the Lgt family.</text>
</comment>
<gene>
    <name evidence="1" type="primary">lgt</name>
    <name type="ordered locus">P9301_04851</name>
</gene>
<feature type="chain" id="PRO_1000053466" description="Phosphatidylglycerol--prolipoprotein diacylglyceryl transferase">
    <location>
        <begin position="1"/>
        <end position="297"/>
    </location>
</feature>
<feature type="transmembrane region" description="Helical" evidence="1">
    <location>
        <begin position="20"/>
        <end position="40"/>
    </location>
</feature>
<feature type="transmembrane region" description="Helical" evidence="1">
    <location>
        <begin position="57"/>
        <end position="77"/>
    </location>
</feature>
<feature type="transmembrane region" description="Helical" evidence="1">
    <location>
        <begin position="107"/>
        <end position="127"/>
    </location>
</feature>
<feature type="transmembrane region" description="Helical" evidence="1">
    <location>
        <begin position="133"/>
        <end position="153"/>
    </location>
</feature>
<feature type="transmembrane region" description="Helical" evidence="1">
    <location>
        <begin position="193"/>
        <end position="213"/>
    </location>
</feature>
<feature type="transmembrane region" description="Helical" evidence="1">
    <location>
        <begin position="225"/>
        <end position="245"/>
    </location>
</feature>
<feature type="transmembrane region" description="Helical" evidence="1">
    <location>
        <begin position="266"/>
        <end position="286"/>
    </location>
</feature>
<feature type="binding site" evidence="1">
    <location>
        <position position="154"/>
    </location>
    <ligand>
        <name>a 1,2-diacyl-sn-glycero-3-phospho-(1'-sn-glycerol)</name>
        <dbReference type="ChEBI" id="CHEBI:64716"/>
    </ligand>
</feature>
<name>LGT_PROM0</name>
<evidence type="ECO:0000255" key="1">
    <source>
        <dbReference type="HAMAP-Rule" id="MF_01147"/>
    </source>
</evidence>
<reference key="1">
    <citation type="journal article" date="2007" name="PLoS Genet.">
        <title>Patterns and implications of gene gain and loss in the evolution of Prochlorococcus.</title>
        <authorList>
            <person name="Kettler G.C."/>
            <person name="Martiny A.C."/>
            <person name="Huang K."/>
            <person name="Zucker J."/>
            <person name="Coleman M.L."/>
            <person name="Rodrigue S."/>
            <person name="Chen F."/>
            <person name="Lapidus A."/>
            <person name="Ferriera S."/>
            <person name="Johnson J."/>
            <person name="Steglich C."/>
            <person name="Church G.M."/>
            <person name="Richardson P."/>
            <person name="Chisholm S.W."/>
        </authorList>
    </citation>
    <scope>NUCLEOTIDE SEQUENCE [LARGE SCALE GENOMIC DNA]</scope>
    <source>
        <strain>MIT 9301</strain>
    </source>
</reference>
<accession>A3PBI3</accession>
<sequence>MLTFQAFIQSPGETFLNLGFITIRWYGLLISVSVLIGLFISKKLAKARNINPEYISEILPSLIIFSIIGARAYYVIFEWRQYSGENFFTSLELFNNAIKIPSFLAVWEGGIAIHGGLIGGLISIIFFCKSKKIHLKTFIDILIPSIILGQSIGRWGNFFNNEAFGIPTNLPWKLFIPIQNRPLEFINYEFFHPTFLYESLWNLLVFIFLILIFNKQNKTDFFRPGFISCLYLICYSFGRFWIEGLRTDPLCIGGLPPFCDGGIRMAQFISIFLFSSGLIGIFFLRLRTYIGKNRKNG</sequence>
<keyword id="KW-0997">Cell inner membrane</keyword>
<keyword id="KW-1003">Cell membrane</keyword>
<keyword id="KW-0472">Membrane</keyword>
<keyword id="KW-1185">Reference proteome</keyword>
<keyword id="KW-0808">Transferase</keyword>
<keyword id="KW-0812">Transmembrane</keyword>
<keyword id="KW-1133">Transmembrane helix</keyword>